<name>RL3_BRUSI</name>
<sequence>MRSGVIAQKLGMTRVYNDAGEHVPVTVLRMENCHVVAQRTVEKNGYTAVQLGVGMAKVKNTSKAMRGHFAKAEVEPKAKLAEFRVSPDNLLEVGVEITAEHFVAGQKVDVTGTSIGKGFAGVMKRHNFGGHRASHGNSITHRSHGSTGQRQDPGKVFKGKKMAGHMGQTRVTTQNIEVVSTDSDRGLILVRGAVPGSKGAWILVRDAVKASLPENAPKPAGLRAGAKAEAAATEGAE</sequence>
<proteinExistence type="inferred from homology"/>
<protein>
    <recommendedName>
        <fullName evidence="1">Large ribosomal subunit protein uL3</fullName>
    </recommendedName>
    <alternativeName>
        <fullName evidence="3">50S ribosomal protein L3</fullName>
    </alternativeName>
</protein>
<keyword id="KW-0488">Methylation</keyword>
<keyword id="KW-0687">Ribonucleoprotein</keyword>
<keyword id="KW-0689">Ribosomal protein</keyword>
<keyword id="KW-0694">RNA-binding</keyword>
<keyword id="KW-0699">rRNA-binding</keyword>
<evidence type="ECO:0000255" key="1">
    <source>
        <dbReference type="HAMAP-Rule" id="MF_01325"/>
    </source>
</evidence>
<evidence type="ECO:0000256" key="2">
    <source>
        <dbReference type="SAM" id="MobiDB-lite"/>
    </source>
</evidence>
<evidence type="ECO:0000305" key="3"/>
<reference key="1">
    <citation type="submission" date="2007-12" db="EMBL/GenBank/DDBJ databases">
        <title>Brucella suis ATCC 23445 whole genome shotgun sequencing project.</title>
        <authorList>
            <person name="Setubal J.C."/>
            <person name="Bowns C."/>
            <person name="Boyle S."/>
            <person name="Crasta O.R."/>
            <person name="Czar M.J."/>
            <person name="Dharmanolla C."/>
            <person name="Gillespie J.J."/>
            <person name="Kenyon R.W."/>
            <person name="Lu J."/>
            <person name="Mane S."/>
            <person name="Mohapatra S."/>
            <person name="Nagrani S."/>
            <person name="Purkayastha A."/>
            <person name="Rajasimha H.K."/>
            <person name="Shallom J.M."/>
            <person name="Shallom S."/>
            <person name="Shukla M."/>
            <person name="Snyder E.E."/>
            <person name="Sobral B.W."/>
            <person name="Wattam A.R."/>
            <person name="Will R."/>
            <person name="Williams K."/>
            <person name="Yoo H."/>
            <person name="Bruce D."/>
            <person name="Detter C."/>
            <person name="Munk C."/>
            <person name="Brettin T.S."/>
        </authorList>
    </citation>
    <scope>NUCLEOTIDE SEQUENCE [LARGE SCALE GENOMIC DNA]</scope>
    <source>
        <strain>ATCC 23445 / NCTC 10510</strain>
    </source>
</reference>
<dbReference type="EMBL" id="CP000911">
    <property type="protein sequence ID" value="ABY38333.1"/>
    <property type="molecule type" value="Genomic_DNA"/>
</dbReference>
<dbReference type="RefSeq" id="WP_004688461.1">
    <property type="nucleotide sequence ID" value="NC_010169.1"/>
</dbReference>
<dbReference type="SMR" id="B0CH32"/>
<dbReference type="GeneID" id="55590908"/>
<dbReference type="KEGG" id="bmt:BSUIS_A1282"/>
<dbReference type="HOGENOM" id="CLU_044142_2_0_5"/>
<dbReference type="Proteomes" id="UP000008545">
    <property type="component" value="Chromosome I"/>
</dbReference>
<dbReference type="GO" id="GO:0022625">
    <property type="term" value="C:cytosolic large ribosomal subunit"/>
    <property type="evidence" value="ECO:0007669"/>
    <property type="project" value="TreeGrafter"/>
</dbReference>
<dbReference type="GO" id="GO:0019843">
    <property type="term" value="F:rRNA binding"/>
    <property type="evidence" value="ECO:0007669"/>
    <property type="project" value="UniProtKB-UniRule"/>
</dbReference>
<dbReference type="GO" id="GO:0003735">
    <property type="term" value="F:structural constituent of ribosome"/>
    <property type="evidence" value="ECO:0007669"/>
    <property type="project" value="InterPro"/>
</dbReference>
<dbReference type="GO" id="GO:0006412">
    <property type="term" value="P:translation"/>
    <property type="evidence" value="ECO:0007669"/>
    <property type="project" value="UniProtKB-UniRule"/>
</dbReference>
<dbReference type="FunFam" id="2.40.30.10:FF:000004">
    <property type="entry name" value="50S ribosomal protein L3"/>
    <property type="match status" value="1"/>
</dbReference>
<dbReference type="FunFam" id="3.30.160.810:FF:000001">
    <property type="entry name" value="50S ribosomal protein L3"/>
    <property type="match status" value="1"/>
</dbReference>
<dbReference type="Gene3D" id="3.30.160.810">
    <property type="match status" value="1"/>
</dbReference>
<dbReference type="Gene3D" id="2.40.30.10">
    <property type="entry name" value="Translation factors"/>
    <property type="match status" value="1"/>
</dbReference>
<dbReference type="HAMAP" id="MF_01325_B">
    <property type="entry name" value="Ribosomal_uL3_B"/>
    <property type="match status" value="1"/>
</dbReference>
<dbReference type="InterPro" id="IPR000597">
    <property type="entry name" value="Ribosomal_uL3"/>
</dbReference>
<dbReference type="InterPro" id="IPR019927">
    <property type="entry name" value="Ribosomal_uL3_bac/org-type"/>
</dbReference>
<dbReference type="InterPro" id="IPR019926">
    <property type="entry name" value="Ribosomal_uL3_CS"/>
</dbReference>
<dbReference type="InterPro" id="IPR009000">
    <property type="entry name" value="Transl_B-barrel_sf"/>
</dbReference>
<dbReference type="NCBIfam" id="TIGR03625">
    <property type="entry name" value="L3_bact"/>
    <property type="match status" value="1"/>
</dbReference>
<dbReference type="PANTHER" id="PTHR11229">
    <property type="entry name" value="50S RIBOSOMAL PROTEIN L3"/>
    <property type="match status" value="1"/>
</dbReference>
<dbReference type="PANTHER" id="PTHR11229:SF16">
    <property type="entry name" value="LARGE RIBOSOMAL SUBUNIT PROTEIN UL3C"/>
    <property type="match status" value="1"/>
</dbReference>
<dbReference type="Pfam" id="PF00297">
    <property type="entry name" value="Ribosomal_L3"/>
    <property type="match status" value="1"/>
</dbReference>
<dbReference type="SUPFAM" id="SSF50447">
    <property type="entry name" value="Translation proteins"/>
    <property type="match status" value="1"/>
</dbReference>
<dbReference type="PROSITE" id="PS00474">
    <property type="entry name" value="RIBOSOMAL_L3"/>
    <property type="match status" value="1"/>
</dbReference>
<gene>
    <name evidence="1" type="primary">rplC</name>
    <name type="ordered locus">BSUIS_A1282</name>
</gene>
<feature type="chain" id="PRO_1000086429" description="Large ribosomal subunit protein uL3">
    <location>
        <begin position="1"/>
        <end position="237"/>
    </location>
</feature>
<feature type="region of interest" description="Disordered" evidence="2">
    <location>
        <begin position="133"/>
        <end position="155"/>
    </location>
</feature>
<feature type="region of interest" description="Disordered" evidence="2">
    <location>
        <begin position="213"/>
        <end position="237"/>
    </location>
</feature>
<feature type="compositionally biased region" description="Polar residues" evidence="2">
    <location>
        <begin position="135"/>
        <end position="150"/>
    </location>
</feature>
<feature type="compositionally biased region" description="Low complexity" evidence="2">
    <location>
        <begin position="220"/>
        <end position="237"/>
    </location>
</feature>
<feature type="modified residue" description="N5-methylglutamine" evidence="1">
    <location>
        <position position="151"/>
    </location>
</feature>
<organism>
    <name type="scientific">Brucella suis (strain ATCC 23445 / NCTC 10510)</name>
    <dbReference type="NCBI Taxonomy" id="470137"/>
    <lineage>
        <taxon>Bacteria</taxon>
        <taxon>Pseudomonadati</taxon>
        <taxon>Pseudomonadota</taxon>
        <taxon>Alphaproteobacteria</taxon>
        <taxon>Hyphomicrobiales</taxon>
        <taxon>Brucellaceae</taxon>
        <taxon>Brucella/Ochrobactrum group</taxon>
        <taxon>Brucella</taxon>
    </lineage>
</organism>
<accession>B0CH32</accession>
<comment type="function">
    <text evidence="1">One of the primary rRNA binding proteins, it binds directly near the 3'-end of the 23S rRNA, where it nucleates assembly of the 50S subunit.</text>
</comment>
<comment type="subunit">
    <text evidence="1">Part of the 50S ribosomal subunit. Forms a cluster with proteins L14 and L19.</text>
</comment>
<comment type="PTM">
    <text evidence="1">Methylated by PrmB.</text>
</comment>
<comment type="similarity">
    <text evidence="1">Belongs to the universal ribosomal protein uL3 family.</text>
</comment>